<dbReference type="EC" id="3.1.3.-"/>
<dbReference type="EMBL" id="BA000011">
    <property type="protein sequence ID" value="BAB59740.1"/>
    <property type="molecule type" value="Genomic_DNA"/>
</dbReference>
<dbReference type="SMR" id="Q97B60"/>
<dbReference type="STRING" id="273116.gene:9381386"/>
<dbReference type="PaxDb" id="273116-14324813"/>
<dbReference type="KEGG" id="tvo:TVG0590688"/>
<dbReference type="eggNOG" id="arCOG07384">
    <property type="taxonomic scope" value="Archaea"/>
</dbReference>
<dbReference type="HOGENOM" id="CLU_085077_4_1_2"/>
<dbReference type="PhylomeDB" id="Q97B60"/>
<dbReference type="Proteomes" id="UP000001017">
    <property type="component" value="Chromosome"/>
</dbReference>
<dbReference type="GO" id="GO:0005737">
    <property type="term" value="C:cytoplasm"/>
    <property type="evidence" value="ECO:0007669"/>
    <property type="project" value="UniProtKB-SubCell"/>
</dbReference>
<dbReference type="GO" id="GO:0034200">
    <property type="term" value="F:D-glycero-beta-D-manno-heptose 1,7-bisphosphate 7-phosphatase activity"/>
    <property type="evidence" value="ECO:0000250"/>
    <property type="project" value="UniProtKB"/>
</dbReference>
<dbReference type="GO" id="GO:0000287">
    <property type="term" value="F:magnesium ion binding"/>
    <property type="evidence" value="ECO:0000250"/>
    <property type="project" value="UniProtKB"/>
</dbReference>
<dbReference type="GO" id="GO:0008270">
    <property type="term" value="F:zinc ion binding"/>
    <property type="evidence" value="ECO:0000250"/>
    <property type="project" value="UniProtKB"/>
</dbReference>
<dbReference type="GO" id="GO:0005975">
    <property type="term" value="P:carbohydrate metabolic process"/>
    <property type="evidence" value="ECO:0007669"/>
    <property type="project" value="InterPro"/>
</dbReference>
<dbReference type="CDD" id="cd07503">
    <property type="entry name" value="HAD_HisB-N"/>
    <property type="match status" value="1"/>
</dbReference>
<dbReference type="Gene3D" id="3.40.50.1000">
    <property type="entry name" value="HAD superfamily/HAD-like"/>
    <property type="match status" value="1"/>
</dbReference>
<dbReference type="InterPro" id="IPR036412">
    <property type="entry name" value="HAD-like_sf"/>
</dbReference>
<dbReference type="InterPro" id="IPR006549">
    <property type="entry name" value="HAD-SF_hydro_IIIA"/>
</dbReference>
<dbReference type="InterPro" id="IPR023214">
    <property type="entry name" value="HAD_sf"/>
</dbReference>
<dbReference type="InterPro" id="IPR004446">
    <property type="entry name" value="Heptose_bisP_phosphatase"/>
</dbReference>
<dbReference type="InterPro" id="IPR006543">
    <property type="entry name" value="Histidinol-phos"/>
</dbReference>
<dbReference type="InterPro" id="IPR013954">
    <property type="entry name" value="PNK3P"/>
</dbReference>
<dbReference type="NCBIfam" id="TIGR01662">
    <property type="entry name" value="HAD-SF-IIIA"/>
    <property type="match status" value="1"/>
</dbReference>
<dbReference type="NCBIfam" id="TIGR01656">
    <property type="entry name" value="Histidinol-ppas"/>
    <property type="match status" value="1"/>
</dbReference>
<dbReference type="PANTHER" id="PTHR42891">
    <property type="entry name" value="D-GLYCERO-BETA-D-MANNO-HEPTOSE-1,7-BISPHOSPHATE 7-PHOSPHATASE"/>
    <property type="match status" value="1"/>
</dbReference>
<dbReference type="PANTHER" id="PTHR42891:SF1">
    <property type="entry name" value="D-GLYCERO-BETA-D-MANNO-HEPTOSE-1,7-BISPHOSPHATE 7-PHOSPHATASE"/>
    <property type="match status" value="1"/>
</dbReference>
<dbReference type="Pfam" id="PF08645">
    <property type="entry name" value="PNK3P"/>
    <property type="match status" value="1"/>
</dbReference>
<dbReference type="PIRSF" id="PIRSF004682">
    <property type="entry name" value="GmhB"/>
    <property type="match status" value="1"/>
</dbReference>
<dbReference type="SUPFAM" id="SSF56784">
    <property type="entry name" value="HAD-like"/>
    <property type="match status" value="1"/>
</dbReference>
<keyword id="KW-0119">Carbohydrate metabolism</keyword>
<keyword id="KW-0963">Cytoplasm</keyword>
<keyword id="KW-0378">Hydrolase</keyword>
<keyword id="KW-0460">Magnesium</keyword>
<keyword id="KW-0479">Metal-binding</keyword>
<keyword id="KW-0862">Zinc</keyword>
<protein>
    <recommendedName>
        <fullName>Probable D-glycero-D-manno-heptose-1,7-bisphosphate 7-phosphatase</fullName>
        <ecNumber>3.1.3.-</ecNumber>
    </recommendedName>
    <alternativeName>
        <fullName>D,D-heptose 1,7-bisphosphate phosphatase</fullName>
        <shortName>HBP phosphatase</shortName>
    </alternativeName>
</protein>
<evidence type="ECO:0000250" key="1"/>
<evidence type="ECO:0000250" key="2">
    <source>
        <dbReference type="UniProtKB" id="Q7WG29"/>
    </source>
</evidence>
<evidence type="ECO:0000305" key="3"/>
<proteinExistence type="inferred from homology"/>
<accession>Q97B60</accession>
<reference key="1">
    <citation type="journal article" date="2000" name="Proc. Natl. Acad. Sci. U.S.A.">
        <title>Archaeal adaptation to higher temperatures revealed by genomic sequence of Thermoplasma volcanium.</title>
        <authorList>
            <person name="Kawashima T."/>
            <person name="Amano N."/>
            <person name="Koike H."/>
            <person name="Makino S."/>
            <person name="Higuchi S."/>
            <person name="Kawashima-Ohya Y."/>
            <person name="Watanabe K."/>
            <person name="Yamazaki M."/>
            <person name="Kanehori K."/>
            <person name="Kawamoto T."/>
            <person name="Nunoshiba T."/>
            <person name="Yamamoto Y."/>
            <person name="Aramaki H."/>
            <person name="Makino K."/>
            <person name="Suzuki M."/>
        </authorList>
    </citation>
    <scope>NUCLEOTIDE SEQUENCE [LARGE SCALE GENOMIC DNA]</scope>
    <source>
        <strain>ATCC 51530 / DSM 4299 / JCM 9571 / NBRC 15438 / GSS1</strain>
    </source>
</reference>
<comment type="function">
    <text evidence="1">Converts the D-glycero-D-manno-heptose 1,7-bisphosphate intermediate into D-glycero-D-manno-heptose 1-phosphate by removing the phosphate group at the C-7 position.</text>
</comment>
<comment type="catalytic activity">
    <reaction>
        <text>D-glycero-D-manno-heptose 1,7-bisphosphate + H2O = D-glycero-D-manno-heptose 1-phosphate + phosphate</text>
        <dbReference type="Rhea" id="RHEA:48504"/>
        <dbReference type="ChEBI" id="CHEBI:15377"/>
        <dbReference type="ChEBI" id="CHEBI:43474"/>
        <dbReference type="ChEBI" id="CHEBI:59957"/>
        <dbReference type="ChEBI" id="CHEBI:60002"/>
    </reaction>
</comment>
<comment type="cofactor">
    <cofactor evidence="1">
        <name>Mg(2+)</name>
        <dbReference type="ChEBI" id="CHEBI:18420"/>
    </cofactor>
</comment>
<comment type="cofactor">
    <cofactor evidence="1">
        <name>Zn(2+)</name>
        <dbReference type="ChEBI" id="CHEBI:29105"/>
    </cofactor>
</comment>
<comment type="subunit">
    <text evidence="1">Monomer.</text>
</comment>
<comment type="subcellular location">
    <subcellularLocation>
        <location evidence="1">Cytoplasm</location>
    </subcellularLocation>
</comment>
<comment type="similarity">
    <text evidence="3">Belongs to the GmhB family.</text>
</comment>
<sequence length="146" mass="16939">MKTLFIDRDGTINKDCPYCHNPSDLFIYPDAVDLLQRYQDDGFRIIIVTNQSGIGRGYFTESQFKEFSDFMNDKLKENGIVISAIYYCPHKPEDSCNCRKPETGLFSEVLEDYKVDIPSSIVVGDRNEIDGEFARRIKLPFRLLRH</sequence>
<feature type="chain" id="PRO_0000209411" description="Probable D-glycero-D-manno-heptose-1,7-bisphosphate 7-phosphatase">
    <location>
        <begin position="1"/>
        <end position="146"/>
    </location>
</feature>
<feature type="active site" description="Nucleophile" evidence="1">
    <location>
        <position position="7"/>
    </location>
</feature>
<feature type="active site" description="Proton donor" evidence="1">
    <location>
        <position position="9"/>
    </location>
</feature>
<feature type="binding site" evidence="1">
    <location>
        <begin position="7"/>
        <end position="9"/>
    </location>
    <ligand>
        <name>substrate</name>
    </ligand>
</feature>
<feature type="binding site" evidence="1">
    <location>
        <position position="7"/>
    </location>
    <ligand>
        <name>Mg(2+)</name>
        <dbReference type="ChEBI" id="CHEBI:18420"/>
    </ligand>
</feature>
<feature type="binding site" evidence="1">
    <location>
        <position position="9"/>
    </location>
    <ligand>
        <name>Mg(2+)</name>
        <dbReference type="ChEBI" id="CHEBI:18420"/>
    </ligand>
</feature>
<feature type="binding site" evidence="1">
    <location>
        <begin position="15"/>
        <end position="18"/>
    </location>
    <ligand>
        <name>substrate</name>
    </ligand>
</feature>
<feature type="binding site" evidence="1">
    <location>
        <begin position="49"/>
        <end position="52"/>
    </location>
    <ligand>
        <name>substrate</name>
    </ligand>
</feature>
<feature type="binding site" evidence="2">
    <location>
        <position position="88"/>
    </location>
    <ligand>
        <name>Zn(2+)</name>
        <dbReference type="ChEBI" id="CHEBI:29105"/>
    </ligand>
</feature>
<feature type="binding site" evidence="2">
    <location>
        <position position="90"/>
    </location>
    <ligand>
        <name>Zn(2+)</name>
        <dbReference type="ChEBI" id="CHEBI:29105"/>
    </ligand>
</feature>
<feature type="binding site" evidence="2">
    <location>
        <position position="96"/>
    </location>
    <ligand>
        <name>Zn(2+)</name>
        <dbReference type="ChEBI" id="CHEBI:29105"/>
    </ligand>
</feature>
<feature type="binding site" evidence="2">
    <location>
        <position position="98"/>
    </location>
    <ligand>
        <name>Zn(2+)</name>
        <dbReference type="ChEBI" id="CHEBI:29105"/>
    </ligand>
</feature>
<feature type="binding site" evidence="1">
    <location>
        <begin position="99"/>
        <end position="100"/>
    </location>
    <ligand>
        <name>substrate</name>
    </ligand>
</feature>
<feature type="binding site" evidence="1">
    <location>
        <position position="125"/>
    </location>
    <ligand>
        <name>Mg(2+)</name>
        <dbReference type="ChEBI" id="CHEBI:18420"/>
    </ligand>
</feature>
<feature type="site" description="Stabilizes the phosphoryl group" evidence="1">
    <location>
        <position position="49"/>
    </location>
</feature>
<feature type="site" description="Contributes to substrate recognition" evidence="1">
    <location>
        <position position="99"/>
    </location>
</feature>
<feature type="site" description="Stabilizes the phosphoryl group" evidence="1">
    <location>
        <position position="100"/>
    </location>
</feature>
<name>GMHB_THEVO</name>
<gene>
    <name type="primary">gmhB</name>
    <name type="ordered locus">TV0598</name>
    <name type="ORF">TVG0590688</name>
</gene>
<organism>
    <name type="scientific">Thermoplasma volcanium (strain ATCC 51530 / DSM 4299 / JCM 9571 / NBRC 15438 / GSS1)</name>
    <dbReference type="NCBI Taxonomy" id="273116"/>
    <lineage>
        <taxon>Archaea</taxon>
        <taxon>Methanobacteriati</taxon>
        <taxon>Thermoplasmatota</taxon>
        <taxon>Thermoplasmata</taxon>
        <taxon>Thermoplasmatales</taxon>
        <taxon>Thermoplasmataceae</taxon>
        <taxon>Thermoplasma</taxon>
    </lineage>
</organism>